<proteinExistence type="inferred from homology"/>
<organism>
    <name type="scientific">Parabacteroides distasonis (strain ATCC 8503 / DSM 20701 / CIP 104284 / JCM 5825 / NCTC 11152)</name>
    <dbReference type="NCBI Taxonomy" id="435591"/>
    <lineage>
        <taxon>Bacteria</taxon>
        <taxon>Pseudomonadati</taxon>
        <taxon>Bacteroidota</taxon>
        <taxon>Bacteroidia</taxon>
        <taxon>Bacteroidales</taxon>
        <taxon>Tannerellaceae</taxon>
        <taxon>Parabacteroides</taxon>
    </lineage>
</organism>
<comment type="function">
    <text evidence="1">Catalyzes the reversible reaction in which hydroxymethyl group from 5,10-methylenetetrahydrofolate is transferred onto alpha-ketoisovalerate to form ketopantoate.</text>
</comment>
<comment type="catalytic activity">
    <reaction evidence="1">
        <text>3-methyl-2-oxobutanoate + (6R)-5,10-methylene-5,6,7,8-tetrahydrofolate + H2O = 2-dehydropantoate + (6S)-5,6,7,8-tetrahydrofolate</text>
        <dbReference type="Rhea" id="RHEA:11824"/>
        <dbReference type="ChEBI" id="CHEBI:11561"/>
        <dbReference type="ChEBI" id="CHEBI:11851"/>
        <dbReference type="ChEBI" id="CHEBI:15377"/>
        <dbReference type="ChEBI" id="CHEBI:15636"/>
        <dbReference type="ChEBI" id="CHEBI:57453"/>
        <dbReference type="EC" id="2.1.2.11"/>
    </reaction>
</comment>
<comment type="cofactor">
    <cofactor evidence="1">
        <name>Mg(2+)</name>
        <dbReference type="ChEBI" id="CHEBI:18420"/>
    </cofactor>
    <text evidence="1">Binds 1 Mg(2+) ion per subunit.</text>
</comment>
<comment type="pathway">
    <text evidence="1">Cofactor biosynthesis; (R)-pantothenate biosynthesis; (R)-pantoate from 3-methyl-2-oxobutanoate: step 1/2.</text>
</comment>
<comment type="subunit">
    <text evidence="1">Homodecamer; pentamer of dimers.</text>
</comment>
<comment type="subcellular location">
    <subcellularLocation>
        <location evidence="1">Cytoplasm</location>
    </subcellularLocation>
</comment>
<comment type="similarity">
    <text evidence="1">Belongs to the PanB family.</text>
</comment>
<name>PANB_PARD8</name>
<dbReference type="EC" id="2.1.2.11" evidence="1"/>
<dbReference type="EMBL" id="CP000140">
    <property type="protein sequence ID" value="ABR42582.1"/>
    <property type="molecule type" value="Genomic_DNA"/>
</dbReference>
<dbReference type="RefSeq" id="WP_005862774.1">
    <property type="nucleotide sequence ID" value="NC_009615.1"/>
</dbReference>
<dbReference type="SMR" id="A6LA68"/>
<dbReference type="STRING" id="435591.BDI_0812"/>
<dbReference type="PaxDb" id="435591-BDI_0812"/>
<dbReference type="KEGG" id="pdi:BDI_0812"/>
<dbReference type="eggNOG" id="COG0413">
    <property type="taxonomic scope" value="Bacteria"/>
</dbReference>
<dbReference type="HOGENOM" id="CLU_036645_1_0_10"/>
<dbReference type="BioCyc" id="PDIS435591:G1G5A-832-MONOMER"/>
<dbReference type="UniPathway" id="UPA00028">
    <property type="reaction ID" value="UER00003"/>
</dbReference>
<dbReference type="Proteomes" id="UP000000566">
    <property type="component" value="Chromosome"/>
</dbReference>
<dbReference type="GO" id="GO:0005737">
    <property type="term" value="C:cytoplasm"/>
    <property type="evidence" value="ECO:0007669"/>
    <property type="project" value="UniProtKB-SubCell"/>
</dbReference>
<dbReference type="GO" id="GO:0003864">
    <property type="term" value="F:3-methyl-2-oxobutanoate hydroxymethyltransferase activity"/>
    <property type="evidence" value="ECO:0007669"/>
    <property type="project" value="UniProtKB-UniRule"/>
</dbReference>
<dbReference type="GO" id="GO:0000287">
    <property type="term" value="F:magnesium ion binding"/>
    <property type="evidence" value="ECO:0007669"/>
    <property type="project" value="TreeGrafter"/>
</dbReference>
<dbReference type="GO" id="GO:0015940">
    <property type="term" value="P:pantothenate biosynthetic process"/>
    <property type="evidence" value="ECO:0007669"/>
    <property type="project" value="UniProtKB-UniRule"/>
</dbReference>
<dbReference type="CDD" id="cd06557">
    <property type="entry name" value="KPHMT-like"/>
    <property type="match status" value="1"/>
</dbReference>
<dbReference type="FunFam" id="3.20.20.60:FF:000017">
    <property type="entry name" value="3-methyl-2-oxobutanoate hydroxymethyltransferase"/>
    <property type="match status" value="1"/>
</dbReference>
<dbReference type="Gene3D" id="3.20.20.60">
    <property type="entry name" value="Phosphoenolpyruvate-binding domains"/>
    <property type="match status" value="1"/>
</dbReference>
<dbReference type="HAMAP" id="MF_00156">
    <property type="entry name" value="PanB"/>
    <property type="match status" value="1"/>
</dbReference>
<dbReference type="InterPro" id="IPR003700">
    <property type="entry name" value="Pantoate_hydroxy_MeTrfase"/>
</dbReference>
<dbReference type="InterPro" id="IPR015813">
    <property type="entry name" value="Pyrv/PenolPyrv_kinase-like_dom"/>
</dbReference>
<dbReference type="InterPro" id="IPR040442">
    <property type="entry name" value="Pyrv_kinase-like_dom_sf"/>
</dbReference>
<dbReference type="NCBIfam" id="TIGR00222">
    <property type="entry name" value="panB"/>
    <property type="match status" value="1"/>
</dbReference>
<dbReference type="NCBIfam" id="NF001452">
    <property type="entry name" value="PRK00311.1"/>
    <property type="match status" value="1"/>
</dbReference>
<dbReference type="PANTHER" id="PTHR20881">
    <property type="entry name" value="3-METHYL-2-OXOBUTANOATE HYDROXYMETHYLTRANSFERASE"/>
    <property type="match status" value="1"/>
</dbReference>
<dbReference type="PANTHER" id="PTHR20881:SF0">
    <property type="entry name" value="3-METHYL-2-OXOBUTANOATE HYDROXYMETHYLTRANSFERASE"/>
    <property type="match status" value="1"/>
</dbReference>
<dbReference type="Pfam" id="PF02548">
    <property type="entry name" value="Pantoate_transf"/>
    <property type="match status" value="1"/>
</dbReference>
<dbReference type="PIRSF" id="PIRSF000388">
    <property type="entry name" value="Pantoate_hydroxy_MeTrfase"/>
    <property type="match status" value="1"/>
</dbReference>
<dbReference type="SUPFAM" id="SSF51621">
    <property type="entry name" value="Phosphoenolpyruvate/pyruvate domain"/>
    <property type="match status" value="1"/>
</dbReference>
<reference key="1">
    <citation type="journal article" date="2007" name="PLoS Biol.">
        <title>Evolution of symbiotic bacteria in the distal human intestine.</title>
        <authorList>
            <person name="Xu J."/>
            <person name="Mahowald M.A."/>
            <person name="Ley R.E."/>
            <person name="Lozupone C.A."/>
            <person name="Hamady M."/>
            <person name="Martens E.C."/>
            <person name="Henrissat B."/>
            <person name="Coutinho P.M."/>
            <person name="Minx P."/>
            <person name="Latreille P."/>
            <person name="Cordum H."/>
            <person name="Van Brunt A."/>
            <person name="Kim K."/>
            <person name="Fulton R.S."/>
            <person name="Fulton L.A."/>
            <person name="Clifton S.W."/>
            <person name="Wilson R.K."/>
            <person name="Knight R.D."/>
            <person name="Gordon J.I."/>
        </authorList>
    </citation>
    <scope>NUCLEOTIDE SEQUENCE [LARGE SCALE GENOMIC DNA]</scope>
    <source>
        <strain>ATCC 8503 / DSM 20701 / CIP 104284 / JCM 5825 / NCTC 11152</strain>
    </source>
</reference>
<evidence type="ECO:0000255" key="1">
    <source>
        <dbReference type="HAMAP-Rule" id="MF_00156"/>
    </source>
</evidence>
<gene>
    <name evidence="1" type="primary">panB</name>
    <name type="ordered locus">BDI_0812</name>
</gene>
<accession>A6LA68</accession>
<keyword id="KW-0963">Cytoplasm</keyword>
<keyword id="KW-0460">Magnesium</keyword>
<keyword id="KW-0479">Metal-binding</keyword>
<keyword id="KW-0566">Pantothenate biosynthesis</keyword>
<keyword id="KW-1185">Reference proteome</keyword>
<keyword id="KW-0808">Transferase</keyword>
<feature type="chain" id="PRO_1000011375" description="3-methyl-2-oxobutanoate hydroxymethyltransferase">
    <location>
        <begin position="1"/>
        <end position="273"/>
    </location>
</feature>
<feature type="active site" description="Proton acceptor" evidence="1">
    <location>
        <position position="191"/>
    </location>
</feature>
<feature type="binding site" evidence="1">
    <location>
        <begin position="53"/>
        <end position="54"/>
    </location>
    <ligand>
        <name>3-methyl-2-oxobutanoate</name>
        <dbReference type="ChEBI" id="CHEBI:11851"/>
    </ligand>
</feature>
<feature type="binding site" evidence="1">
    <location>
        <position position="53"/>
    </location>
    <ligand>
        <name>Mg(2+)</name>
        <dbReference type="ChEBI" id="CHEBI:18420"/>
    </ligand>
</feature>
<feature type="binding site" evidence="1">
    <location>
        <position position="92"/>
    </location>
    <ligand>
        <name>3-methyl-2-oxobutanoate</name>
        <dbReference type="ChEBI" id="CHEBI:11851"/>
    </ligand>
</feature>
<feature type="binding site" evidence="1">
    <location>
        <position position="92"/>
    </location>
    <ligand>
        <name>Mg(2+)</name>
        <dbReference type="ChEBI" id="CHEBI:18420"/>
    </ligand>
</feature>
<feature type="binding site" evidence="1">
    <location>
        <position position="122"/>
    </location>
    <ligand>
        <name>3-methyl-2-oxobutanoate</name>
        <dbReference type="ChEBI" id="CHEBI:11851"/>
    </ligand>
</feature>
<feature type="binding site" evidence="1">
    <location>
        <position position="124"/>
    </location>
    <ligand>
        <name>Mg(2+)</name>
        <dbReference type="ChEBI" id="CHEBI:18420"/>
    </ligand>
</feature>
<sequence length="273" mass="29851">MSVAKVDDNRKVTTHRLIEMKQRGEKISMLTAYDYSMAKLIDQAGMDVILVGDSASNVMAGNVTTLPITLDQMIYHGKSVMKAVNRALVVVDLPFGTYQGNSKEALASAIRVMKETHADCIKLEGGAEVRESIERILCAGIPIMGHLGLTPQSINKFGTYTVRAREEAEAKKLIEDAHLLEEIGCFALVLEKIPAELAARVASELTIPVIGIGAGGGVDGQVLVMHDMLGINQGFSPRFLRRYANLGEEITRAVQAYIEDVKSQDFPNEKEQY</sequence>
<protein>
    <recommendedName>
        <fullName evidence="1">3-methyl-2-oxobutanoate hydroxymethyltransferase</fullName>
        <ecNumber evidence="1">2.1.2.11</ecNumber>
    </recommendedName>
    <alternativeName>
        <fullName evidence="1">Ketopantoate hydroxymethyltransferase</fullName>
        <shortName evidence="1">KPHMT</shortName>
    </alternativeName>
</protein>